<reference key="1">
    <citation type="journal article" date="2006" name="Proc. Natl. Acad. Sci. U.S.A.">
        <title>Genome sequence of Synechococcus CC9311: insights into adaptation to a coastal environment.</title>
        <authorList>
            <person name="Palenik B."/>
            <person name="Ren Q."/>
            <person name="Dupont C.L."/>
            <person name="Myers G.S."/>
            <person name="Heidelberg J.F."/>
            <person name="Badger J.H."/>
            <person name="Madupu R."/>
            <person name="Nelson W.C."/>
            <person name="Brinkac L.M."/>
            <person name="Dodson R.J."/>
            <person name="Durkin A.S."/>
            <person name="Daugherty S.C."/>
            <person name="Sullivan S.A."/>
            <person name="Khouri H."/>
            <person name="Mohamoud Y."/>
            <person name="Halpin R."/>
            <person name="Paulsen I.T."/>
        </authorList>
    </citation>
    <scope>NUCLEOTIDE SEQUENCE [LARGE SCALE GENOMIC DNA]</scope>
    <source>
        <strain>CC9311</strain>
    </source>
</reference>
<protein>
    <recommendedName>
        <fullName evidence="1">NAD(P)H-quinone oxidoreductase chain 4</fullName>
        <ecNumber evidence="1">7.1.1.-</ecNumber>
    </recommendedName>
    <alternativeName>
        <fullName evidence="1">NAD(P)H dehydrogenase I, chain 4</fullName>
    </alternativeName>
    <alternativeName>
        <fullName evidence="1">NDH-1, chain 4</fullName>
    </alternativeName>
</protein>
<sequence length="558" mass="60326">MLEFAVSAPFDPAFDISSSIVPATFPWLSLSILFPIVGAFIVPFVPDDGDGKQVRWFALGIALTTFLITAAAYLTGYDPSYSGLQLSERVSWLPNLGLTWAVGADGLSMPLILLTSFITALAVLAAWPVTFKPKLFFFLILAMDGGQIAVFAVQDMLLFFLAWELELLPVYLLLAIWGGKKRQYAATKFILYTAGSSLFILLAALAMGFFGGGVPNFEYSVLAQKGFSTGFELLCYAGLLIAFGVKLPIVPLHTWLPDAHGEATAPVHMLLAGILLKMGGYALMRFNAEILPVAHAQFAPLLVVLGVVNIIYAALTSFAQRNLKRKIAYSSISHMGFVLIGIGSFSELGTSGAMLQMISHGLIGASLFFLVGATYDRTHTLQLDEMGGIGQKMRIMFALWTVCCLASLALPGMSGFVSELMVFAGFATDEAYTLSFRIVIDGLAAIGVILTPIYLLSMLREIFFGKENSELVSHSNLVDSEPREVYIIGCLLVPIIGIGLYPKLMTDSYSNTISALVRRDVDAMERITRPTAPLIRSTSLVPAVFSAPKLTQASQPVS</sequence>
<feature type="chain" id="PRO_0000343252" description="NAD(P)H-quinone oxidoreductase chain 4">
    <location>
        <begin position="1"/>
        <end position="558"/>
    </location>
</feature>
<feature type="transmembrane region" description="Helical" evidence="1">
    <location>
        <begin position="25"/>
        <end position="45"/>
    </location>
</feature>
<feature type="transmembrane region" description="Helical" evidence="1">
    <location>
        <begin position="56"/>
        <end position="76"/>
    </location>
</feature>
<feature type="transmembrane region" description="Helical" evidence="1">
    <location>
        <begin position="90"/>
        <end position="110"/>
    </location>
</feature>
<feature type="transmembrane region" description="Helical" evidence="1">
    <location>
        <begin position="111"/>
        <end position="131"/>
    </location>
</feature>
<feature type="transmembrane region" description="Helical" evidence="1">
    <location>
        <begin position="133"/>
        <end position="153"/>
    </location>
</feature>
<feature type="transmembrane region" description="Helical" evidence="1">
    <location>
        <begin position="157"/>
        <end position="177"/>
    </location>
</feature>
<feature type="transmembrane region" description="Helical" evidence="1">
    <location>
        <begin position="189"/>
        <end position="209"/>
    </location>
</feature>
<feature type="transmembrane region" description="Helical" evidence="1">
    <location>
        <begin position="230"/>
        <end position="250"/>
    </location>
</feature>
<feature type="transmembrane region" description="Helical" evidence="1">
    <location>
        <begin position="264"/>
        <end position="284"/>
    </location>
</feature>
<feature type="transmembrane region" description="Helical" evidence="1">
    <location>
        <begin position="298"/>
        <end position="318"/>
    </location>
</feature>
<feature type="transmembrane region" description="Helical" evidence="1">
    <location>
        <begin position="327"/>
        <end position="347"/>
    </location>
</feature>
<feature type="transmembrane region" description="Helical" evidence="1">
    <location>
        <begin position="353"/>
        <end position="373"/>
    </location>
</feature>
<feature type="transmembrane region" description="Helical" evidence="1">
    <location>
        <begin position="397"/>
        <end position="417"/>
    </location>
</feature>
<feature type="transmembrane region" description="Helical" evidence="1">
    <location>
        <begin position="438"/>
        <end position="458"/>
    </location>
</feature>
<feature type="transmembrane region" description="Helical" evidence="1">
    <location>
        <begin position="485"/>
        <end position="505"/>
    </location>
</feature>
<gene>
    <name evidence="1" type="primary">ndhD</name>
    <name type="ordered locus">sync_2614</name>
</gene>
<comment type="function">
    <text evidence="1">NDH-1 shuttles electrons from NAD(P)H, via FMN and iron-sulfur (Fe-S) centers, to quinones in the respiratory chain. The immediate electron acceptor for the enzyme in this species is believed to be plastoquinone. Couples the redox reaction to proton translocation (for every two electrons transferred, four hydrogen ions are translocated across the cytoplasmic membrane), and thus conserves the redox energy in a proton gradient.</text>
</comment>
<comment type="catalytic activity">
    <reaction evidence="1">
        <text>a plastoquinone + NADH + (n+1) H(+)(in) = a plastoquinol + NAD(+) + n H(+)(out)</text>
        <dbReference type="Rhea" id="RHEA:42608"/>
        <dbReference type="Rhea" id="RHEA-COMP:9561"/>
        <dbReference type="Rhea" id="RHEA-COMP:9562"/>
        <dbReference type="ChEBI" id="CHEBI:15378"/>
        <dbReference type="ChEBI" id="CHEBI:17757"/>
        <dbReference type="ChEBI" id="CHEBI:57540"/>
        <dbReference type="ChEBI" id="CHEBI:57945"/>
        <dbReference type="ChEBI" id="CHEBI:62192"/>
    </reaction>
</comment>
<comment type="catalytic activity">
    <reaction evidence="1">
        <text>a plastoquinone + NADPH + (n+1) H(+)(in) = a plastoquinol + NADP(+) + n H(+)(out)</text>
        <dbReference type="Rhea" id="RHEA:42612"/>
        <dbReference type="Rhea" id="RHEA-COMP:9561"/>
        <dbReference type="Rhea" id="RHEA-COMP:9562"/>
        <dbReference type="ChEBI" id="CHEBI:15378"/>
        <dbReference type="ChEBI" id="CHEBI:17757"/>
        <dbReference type="ChEBI" id="CHEBI:57783"/>
        <dbReference type="ChEBI" id="CHEBI:58349"/>
        <dbReference type="ChEBI" id="CHEBI:62192"/>
    </reaction>
</comment>
<comment type="subcellular location">
    <subcellularLocation>
        <location evidence="1">Cellular thylakoid membrane</location>
        <topology evidence="1">Multi-pass membrane protein</topology>
    </subcellularLocation>
</comment>
<comment type="similarity">
    <text evidence="1">Belongs to the complex I subunit 4 family.</text>
</comment>
<keyword id="KW-0472">Membrane</keyword>
<keyword id="KW-0520">NAD</keyword>
<keyword id="KW-0521">NADP</keyword>
<keyword id="KW-0618">Plastoquinone</keyword>
<keyword id="KW-0874">Quinone</keyword>
<keyword id="KW-1185">Reference proteome</keyword>
<keyword id="KW-0793">Thylakoid</keyword>
<keyword id="KW-1278">Translocase</keyword>
<keyword id="KW-0812">Transmembrane</keyword>
<keyword id="KW-1133">Transmembrane helix</keyword>
<dbReference type="EC" id="7.1.1.-" evidence="1"/>
<dbReference type="EMBL" id="CP000435">
    <property type="protein sequence ID" value="ABI46857.1"/>
    <property type="molecule type" value="Genomic_DNA"/>
</dbReference>
<dbReference type="RefSeq" id="WP_011620506.1">
    <property type="nucleotide sequence ID" value="NC_008319.1"/>
</dbReference>
<dbReference type="SMR" id="Q0I6X0"/>
<dbReference type="STRING" id="64471.sync_2614"/>
<dbReference type="KEGG" id="syg:sync_2614"/>
<dbReference type="eggNOG" id="COG1008">
    <property type="taxonomic scope" value="Bacteria"/>
</dbReference>
<dbReference type="HOGENOM" id="CLU_007100_4_0_3"/>
<dbReference type="OrthoDB" id="9811718at2"/>
<dbReference type="Proteomes" id="UP000001961">
    <property type="component" value="Chromosome"/>
</dbReference>
<dbReference type="GO" id="GO:0031676">
    <property type="term" value="C:plasma membrane-derived thylakoid membrane"/>
    <property type="evidence" value="ECO:0007669"/>
    <property type="project" value="UniProtKB-SubCell"/>
</dbReference>
<dbReference type="GO" id="GO:0008137">
    <property type="term" value="F:NADH dehydrogenase (ubiquinone) activity"/>
    <property type="evidence" value="ECO:0007669"/>
    <property type="project" value="InterPro"/>
</dbReference>
<dbReference type="GO" id="GO:0048039">
    <property type="term" value="F:ubiquinone binding"/>
    <property type="evidence" value="ECO:0007669"/>
    <property type="project" value="TreeGrafter"/>
</dbReference>
<dbReference type="GO" id="GO:0042773">
    <property type="term" value="P:ATP synthesis coupled electron transport"/>
    <property type="evidence" value="ECO:0007669"/>
    <property type="project" value="InterPro"/>
</dbReference>
<dbReference type="GO" id="GO:0015990">
    <property type="term" value="P:electron transport coupled proton transport"/>
    <property type="evidence" value="ECO:0007669"/>
    <property type="project" value="TreeGrafter"/>
</dbReference>
<dbReference type="HAMAP" id="MF_00491">
    <property type="entry name" value="NDH1_NuoM"/>
    <property type="match status" value="1"/>
</dbReference>
<dbReference type="InterPro" id="IPR022997">
    <property type="entry name" value="NADH_Q_OxRdtase_chain4"/>
</dbReference>
<dbReference type="InterPro" id="IPR010227">
    <property type="entry name" value="NADH_Q_OxRdtase_chainM/4"/>
</dbReference>
<dbReference type="InterPro" id="IPR003918">
    <property type="entry name" value="NADH_UbQ_OxRdtase"/>
</dbReference>
<dbReference type="InterPro" id="IPR001750">
    <property type="entry name" value="ND/Mrp_TM"/>
</dbReference>
<dbReference type="NCBIfam" id="TIGR01972">
    <property type="entry name" value="NDH_I_M"/>
    <property type="match status" value="1"/>
</dbReference>
<dbReference type="NCBIfam" id="NF002713">
    <property type="entry name" value="PRK02546.1"/>
    <property type="match status" value="1"/>
</dbReference>
<dbReference type="NCBIfam" id="NF009212">
    <property type="entry name" value="PRK12561.1"/>
    <property type="match status" value="1"/>
</dbReference>
<dbReference type="PANTHER" id="PTHR43507:SF21">
    <property type="entry name" value="NAD(P)H-QUINONE OXIDOREDUCTASE CHAIN 4, CHLOROPLASTIC"/>
    <property type="match status" value="1"/>
</dbReference>
<dbReference type="PANTHER" id="PTHR43507">
    <property type="entry name" value="NADH-UBIQUINONE OXIDOREDUCTASE CHAIN 4"/>
    <property type="match status" value="1"/>
</dbReference>
<dbReference type="Pfam" id="PF00361">
    <property type="entry name" value="Proton_antipo_M"/>
    <property type="match status" value="1"/>
</dbReference>
<dbReference type="PRINTS" id="PR01437">
    <property type="entry name" value="NUOXDRDTASE4"/>
</dbReference>
<proteinExistence type="inferred from homology"/>
<name>NU4C_SYNS3</name>
<evidence type="ECO:0000255" key="1">
    <source>
        <dbReference type="HAMAP-Rule" id="MF_00491"/>
    </source>
</evidence>
<accession>Q0I6X0</accession>
<organism>
    <name type="scientific">Synechococcus sp. (strain CC9311)</name>
    <dbReference type="NCBI Taxonomy" id="64471"/>
    <lineage>
        <taxon>Bacteria</taxon>
        <taxon>Bacillati</taxon>
        <taxon>Cyanobacteriota</taxon>
        <taxon>Cyanophyceae</taxon>
        <taxon>Synechococcales</taxon>
        <taxon>Synechococcaceae</taxon>
        <taxon>Synechococcus</taxon>
    </lineage>
</organism>